<organism>
    <name type="scientific">Saccharomyces cerevisiae (strain ATCC 204508 / S288c)</name>
    <name type="common">Baker's yeast</name>
    <dbReference type="NCBI Taxonomy" id="559292"/>
    <lineage>
        <taxon>Eukaryota</taxon>
        <taxon>Fungi</taxon>
        <taxon>Dikarya</taxon>
        <taxon>Ascomycota</taxon>
        <taxon>Saccharomycotina</taxon>
        <taxon>Saccharomycetes</taxon>
        <taxon>Saccharomycetales</taxon>
        <taxon>Saccharomycetaceae</taxon>
        <taxon>Saccharomyces</taxon>
    </lineage>
</organism>
<evidence type="ECO:0000255" key="1">
    <source>
        <dbReference type="PROSITE-ProRule" id="PRU00042"/>
    </source>
</evidence>
<evidence type="ECO:0000256" key="2">
    <source>
        <dbReference type="SAM" id="MobiDB-lite"/>
    </source>
</evidence>
<evidence type="ECO:0000269" key="3">
    <source>
    </source>
</evidence>
<evidence type="ECO:0000305" key="4"/>
<evidence type="ECO:0007744" key="5">
    <source>
    </source>
</evidence>
<evidence type="ECO:0007744" key="6">
    <source>
    </source>
</evidence>
<proteinExistence type="evidence at protein level"/>
<accession>P27705</accession>
<accession>D6VUA4</accession>
<feature type="chain" id="PRO_0000046881" description="Regulatory protein MIG1">
    <location>
        <begin position="1"/>
        <end position="504"/>
    </location>
</feature>
<feature type="zinc finger region" description="C2H2-type 1" evidence="1">
    <location>
        <begin position="38"/>
        <end position="60"/>
    </location>
</feature>
<feature type="zinc finger region" description="C2H2-type 2" evidence="1">
    <location>
        <begin position="66"/>
        <end position="90"/>
    </location>
</feature>
<feature type="region of interest" description="Disordered" evidence="2">
    <location>
        <begin position="1"/>
        <end position="36"/>
    </location>
</feature>
<feature type="region of interest" description="Disordered" evidence="2">
    <location>
        <begin position="81"/>
        <end position="178"/>
    </location>
</feature>
<feature type="region of interest" description="Disordered" evidence="2">
    <location>
        <begin position="279"/>
        <end position="383"/>
    </location>
</feature>
<feature type="region of interest" description="Disordered" evidence="2">
    <location>
        <begin position="418"/>
        <end position="453"/>
    </location>
</feature>
<feature type="region of interest" description="Disordered" evidence="2">
    <location>
        <begin position="473"/>
        <end position="504"/>
    </location>
</feature>
<feature type="compositionally biased region" description="Polar residues" evidence="2">
    <location>
        <begin position="1"/>
        <end position="14"/>
    </location>
</feature>
<feature type="compositionally biased region" description="Basic residues" evidence="2">
    <location>
        <begin position="85"/>
        <end position="105"/>
    </location>
</feature>
<feature type="compositionally biased region" description="Low complexity" evidence="2">
    <location>
        <begin position="106"/>
        <end position="121"/>
    </location>
</feature>
<feature type="compositionally biased region" description="Low complexity" evidence="2">
    <location>
        <begin position="134"/>
        <end position="143"/>
    </location>
</feature>
<feature type="compositionally biased region" description="Polar residues" evidence="2">
    <location>
        <begin position="294"/>
        <end position="305"/>
    </location>
</feature>
<feature type="compositionally biased region" description="Polar residues" evidence="2">
    <location>
        <begin position="322"/>
        <end position="333"/>
    </location>
</feature>
<feature type="compositionally biased region" description="Polar residues" evidence="2">
    <location>
        <begin position="473"/>
        <end position="486"/>
    </location>
</feature>
<feature type="modified residue" description="Phosphoserine" evidence="6">
    <location>
        <position position="278"/>
    </location>
</feature>
<feature type="modified residue" description="Phosphoserine" evidence="5">
    <location>
        <position position="302"/>
    </location>
</feature>
<feature type="modified residue" description="Phosphoserine" evidence="6">
    <location>
        <position position="310"/>
    </location>
</feature>
<feature type="modified residue" description="Phosphoserine" evidence="6">
    <location>
        <position position="311"/>
    </location>
</feature>
<feature type="modified residue" description="Phosphoserine" evidence="6">
    <location>
        <position position="314"/>
    </location>
</feature>
<feature type="modified residue" description="Phosphoserine" evidence="5">
    <location>
        <position position="377"/>
    </location>
</feature>
<keyword id="KW-0002">3D-structure</keyword>
<keyword id="KW-0119">Carbohydrate metabolism</keyword>
<keyword id="KW-0238">DNA-binding</keyword>
<keyword id="KW-0479">Metal-binding</keyword>
<keyword id="KW-0539">Nucleus</keyword>
<keyword id="KW-0597">Phosphoprotein</keyword>
<keyword id="KW-1185">Reference proteome</keyword>
<keyword id="KW-0677">Repeat</keyword>
<keyword id="KW-0678">Repressor</keyword>
<keyword id="KW-0804">Transcription</keyword>
<keyword id="KW-0805">Transcription regulation</keyword>
<keyword id="KW-0862">Zinc</keyword>
<keyword id="KW-0863">Zinc-finger</keyword>
<reference key="1">
    <citation type="journal article" date="1990" name="EMBO J.">
        <title>Yeast MIG1 repressor is related to the mammalian early growth response and Wilms' tumour finger proteins.</title>
        <authorList>
            <person name="Nehlin J.O."/>
            <person name="Ronne H."/>
        </authorList>
    </citation>
    <scope>NUCLEOTIDE SEQUENCE [GENOMIC DNA]</scope>
    <source>
        <strain>ATCC 208353 / W303-1A</strain>
    </source>
</reference>
<reference key="2">
    <citation type="submission" date="1990-11" db="EMBL/GenBank/DDBJ databases">
        <authorList>
            <person name="Huse K."/>
            <person name="Hohmannn S."/>
            <person name="Valentin E."/>
            <person name="Zimmermann F.K."/>
        </authorList>
    </citation>
    <scope>NUCLEOTIDE SEQUENCE [GENOMIC DNA]</scope>
    <source>
        <strain>ATCC 204510 / AB320</strain>
    </source>
</reference>
<reference key="3">
    <citation type="journal article" date="1997" name="Nature">
        <title>The nucleotide sequence of Saccharomyces cerevisiae chromosome VII.</title>
        <authorList>
            <person name="Tettelin H."/>
            <person name="Agostoni-Carbone M.L."/>
            <person name="Albermann K."/>
            <person name="Albers M."/>
            <person name="Arroyo J."/>
            <person name="Backes U."/>
            <person name="Barreiros T."/>
            <person name="Bertani I."/>
            <person name="Bjourson A.J."/>
            <person name="Brueckner M."/>
            <person name="Bruschi C.V."/>
            <person name="Carignani G."/>
            <person name="Castagnoli L."/>
            <person name="Cerdan E."/>
            <person name="Clemente M.L."/>
            <person name="Coblenz A."/>
            <person name="Coglievina M."/>
            <person name="Coissac E."/>
            <person name="Defoor E."/>
            <person name="Del Bino S."/>
            <person name="Delius H."/>
            <person name="Delneri D."/>
            <person name="de Wergifosse P."/>
            <person name="Dujon B."/>
            <person name="Durand P."/>
            <person name="Entian K.-D."/>
            <person name="Eraso P."/>
            <person name="Escribano V."/>
            <person name="Fabiani L."/>
            <person name="Fartmann B."/>
            <person name="Feroli F."/>
            <person name="Feuermann M."/>
            <person name="Frontali L."/>
            <person name="Garcia-Gonzalez M."/>
            <person name="Garcia-Saez M.I."/>
            <person name="Goffeau A."/>
            <person name="Guerreiro P."/>
            <person name="Hani J."/>
            <person name="Hansen M."/>
            <person name="Hebling U."/>
            <person name="Hernandez K."/>
            <person name="Heumann K."/>
            <person name="Hilger F."/>
            <person name="Hofmann B."/>
            <person name="Indge K.J."/>
            <person name="James C.M."/>
            <person name="Klima R."/>
            <person name="Koetter P."/>
            <person name="Kramer B."/>
            <person name="Kramer W."/>
            <person name="Lauquin G."/>
            <person name="Leuther H."/>
            <person name="Louis E.J."/>
            <person name="Maillier E."/>
            <person name="Marconi A."/>
            <person name="Martegani E."/>
            <person name="Mazon M.J."/>
            <person name="Mazzoni C."/>
            <person name="McReynolds A.D.K."/>
            <person name="Melchioretto P."/>
            <person name="Mewes H.-W."/>
            <person name="Minenkova O."/>
            <person name="Mueller-Auer S."/>
            <person name="Nawrocki A."/>
            <person name="Netter P."/>
            <person name="Neu R."/>
            <person name="Nombela C."/>
            <person name="Oliver S.G."/>
            <person name="Panzeri L."/>
            <person name="Paoluzi S."/>
            <person name="Plevani P."/>
            <person name="Portetelle D."/>
            <person name="Portillo F."/>
            <person name="Potier S."/>
            <person name="Purnelle B."/>
            <person name="Rieger M."/>
            <person name="Riles L."/>
            <person name="Rinaldi T."/>
            <person name="Robben J."/>
            <person name="Rodrigues-Pousada C."/>
            <person name="Rodriguez-Belmonte E."/>
            <person name="Rodriguez-Torres A.M."/>
            <person name="Rose M."/>
            <person name="Ruzzi M."/>
            <person name="Saliola M."/>
            <person name="Sanchez-Perez M."/>
            <person name="Schaefer B."/>
            <person name="Schaefer M."/>
            <person name="Scharfe M."/>
            <person name="Schmidheini T."/>
            <person name="Schreer A."/>
            <person name="Skala J."/>
            <person name="Souciet J.-L."/>
            <person name="Steensma H.Y."/>
            <person name="Talla E."/>
            <person name="Thierry A."/>
            <person name="Vandenbol M."/>
            <person name="van der Aart Q.J.M."/>
            <person name="Van Dyck L."/>
            <person name="Vanoni M."/>
            <person name="Verhasselt P."/>
            <person name="Voet M."/>
            <person name="Volckaert G."/>
            <person name="Wambutt R."/>
            <person name="Watson M.D."/>
            <person name="Weber N."/>
            <person name="Wedler E."/>
            <person name="Wedler H."/>
            <person name="Wipfli P."/>
            <person name="Wolf K."/>
            <person name="Wright L.F."/>
            <person name="Zaccaria P."/>
            <person name="Zimmermann M."/>
            <person name="Zollner A."/>
            <person name="Kleine K."/>
        </authorList>
    </citation>
    <scope>NUCLEOTIDE SEQUENCE [LARGE SCALE GENOMIC DNA]</scope>
    <source>
        <strain>ATCC 204508 / S288c</strain>
    </source>
</reference>
<reference key="4">
    <citation type="journal article" date="2014" name="G3 (Bethesda)">
        <title>The reference genome sequence of Saccharomyces cerevisiae: Then and now.</title>
        <authorList>
            <person name="Engel S.R."/>
            <person name="Dietrich F.S."/>
            <person name="Fisk D.G."/>
            <person name="Binkley G."/>
            <person name="Balakrishnan R."/>
            <person name="Costanzo M.C."/>
            <person name="Dwight S.S."/>
            <person name="Hitz B.C."/>
            <person name="Karra K."/>
            <person name="Nash R.S."/>
            <person name="Weng S."/>
            <person name="Wong E.D."/>
            <person name="Lloyd P."/>
            <person name="Skrzypek M.S."/>
            <person name="Miyasato S.R."/>
            <person name="Simison M."/>
            <person name="Cherry J.M."/>
        </authorList>
    </citation>
    <scope>GENOME REANNOTATION</scope>
    <source>
        <strain>ATCC 204508 / S288c</strain>
    </source>
</reference>
<reference key="5">
    <citation type="journal article" date="2007" name="Genome Res.">
        <title>Approaching a complete repository of sequence-verified protein-encoding clones for Saccharomyces cerevisiae.</title>
        <authorList>
            <person name="Hu Y."/>
            <person name="Rolfs A."/>
            <person name="Bhullar B."/>
            <person name="Murthy T.V.S."/>
            <person name="Zhu C."/>
            <person name="Berger M.F."/>
            <person name="Camargo A.A."/>
            <person name="Kelley F."/>
            <person name="McCarron S."/>
            <person name="Jepson D."/>
            <person name="Richardson A."/>
            <person name="Raphael J."/>
            <person name="Moreira D."/>
            <person name="Taycher E."/>
            <person name="Zuo D."/>
            <person name="Mohr S."/>
            <person name="Kane M.F."/>
            <person name="Williamson J."/>
            <person name="Simpson A.J.G."/>
            <person name="Bulyk M.L."/>
            <person name="Harlow E."/>
            <person name="Marsischky G."/>
            <person name="Kolodner R.D."/>
            <person name="LaBaer J."/>
        </authorList>
    </citation>
    <scope>NUCLEOTIDE SEQUENCE [GENOMIC DNA]</scope>
    <source>
        <strain>ATCC 204508 / S288c</strain>
    </source>
</reference>
<reference key="6">
    <citation type="journal article" date="2003" name="Nature">
        <title>Global analysis of protein expression in yeast.</title>
        <authorList>
            <person name="Ghaemmaghami S."/>
            <person name="Huh W.-K."/>
            <person name="Bower K."/>
            <person name="Howson R.W."/>
            <person name="Belle A."/>
            <person name="Dephoure N."/>
            <person name="O'Shea E.K."/>
            <person name="Weissman J.S."/>
        </authorList>
    </citation>
    <scope>LEVEL OF PROTEIN EXPRESSION [LARGE SCALE ANALYSIS]</scope>
</reference>
<reference key="7">
    <citation type="journal article" date="2005" name="Mol. Cell. Proteomics">
        <title>Quantitative phosphoproteomics applied to the yeast pheromone signaling pathway.</title>
        <authorList>
            <person name="Gruhler A."/>
            <person name="Olsen J.V."/>
            <person name="Mohammed S."/>
            <person name="Mortensen P."/>
            <person name="Faergeman N.J."/>
            <person name="Mann M."/>
            <person name="Jensen O.N."/>
        </authorList>
    </citation>
    <scope>IDENTIFICATION BY MASS SPECTROMETRY [LARGE SCALE ANALYSIS]</scope>
    <source>
        <strain>YAL6B</strain>
    </source>
</reference>
<reference key="8">
    <citation type="journal article" date="2007" name="J. Proteome Res.">
        <title>Large-scale phosphorylation analysis of alpha-factor-arrested Saccharomyces cerevisiae.</title>
        <authorList>
            <person name="Li X."/>
            <person name="Gerber S.A."/>
            <person name="Rudner A.D."/>
            <person name="Beausoleil S.A."/>
            <person name="Haas W."/>
            <person name="Villen J."/>
            <person name="Elias J.E."/>
            <person name="Gygi S.P."/>
        </authorList>
    </citation>
    <scope>IDENTIFICATION BY MASS SPECTROMETRY [LARGE SCALE ANALYSIS]</scope>
    <source>
        <strain>ADR376</strain>
    </source>
</reference>
<reference key="9">
    <citation type="journal article" date="2008" name="Mol. Cell. Proteomics">
        <title>A multidimensional chromatography technology for in-depth phosphoproteome analysis.</title>
        <authorList>
            <person name="Albuquerque C.P."/>
            <person name="Smolka M.B."/>
            <person name="Payne S.H."/>
            <person name="Bafna V."/>
            <person name="Eng J."/>
            <person name="Zhou H."/>
        </authorList>
    </citation>
    <scope>PHOSPHORYLATION [LARGE SCALE ANALYSIS] AT SER-302 AND SER-377</scope>
    <scope>IDENTIFICATION BY MASS SPECTROMETRY [LARGE SCALE ANALYSIS]</scope>
</reference>
<reference key="10">
    <citation type="journal article" date="2009" name="Science">
        <title>Global analysis of Cdk1 substrate phosphorylation sites provides insights into evolution.</title>
        <authorList>
            <person name="Holt L.J."/>
            <person name="Tuch B.B."/>
            <person name="Villen J."/>
            <person name="Johnson A.D."/>
            <person name="Gygi S.P."/>
            <person name="Morgan D.O."/>
        </authorList>
    </citation>
    <scope>PHOSPHORYLATION [LARGE SCALE ANALYSIS] AT SER-278; SER-310; SER-311 AND SER-314</scope>
    <scope>IDENTIFICATION BY MASS SPECTROMETRY [LARGE SCALE ANALYSIS]</scope>
</reference>
<name>MIG1_YEAST</name>
<comment type="function">
    <text>Involved in glucose repression of the SUC, GAL and MAL genes as well as of the CAT8 gene. Binds to two sites in the upstream region of SUC2.</text>
</comment>
<comment type="interaction">
    <interactant intactId="EBI-10913">
        <id>P27705</id>
    </interactant>
    <interactant intactId="EBI-8659">
        <id>P02829</id>
        <label>HSP82</label>
    </interactant>
    <organismsDiffer>false</organismsDiffer>
    <experiments>3</experiments>
</comment>
<comment type="subcellular location">
    <subcellularLocation>
        <location>Nucleus</location>
    </subcellularLocation>
</comment>
<comment type="miscellaneous">
    <text evidence="3">Present with 830 molecules/cell in log phase SD medium.</text>
</comment>
<comment type="similarity">
    <text evidence="4">Belongs to the creA/MIG C2H2-type zinc-finger protein family.</text>
</comment>
<comment type="sequence caution" evidence="4">
    <conflict type="frameshift">
        <sequence resource="EMBL-CDS" id="CAA39084"/>
    </conflict>
</comment>
<sequence>MQSPYPMTQVSNVDDGSLLKESKSKSKVAAKSEAPRPHACPICHRAFHRLEHQTRHMRIHTGEKPHACDFPGCVKRFSRSDELTRHRRIHTNSHPRGKRGRKKKVVGSPINSASSSATSIPDLNTANFSPPLPQQHLSPLIPIAIAPKENSSRSSTRKGRKTKFEIGESGGNDPYMVSSPKTMAKIPVSVKPPPSLALNNMNYQTSSASTALSSLSNSHSGSRLKLNALSSLQMMTPIASSAPRTVFIDGPEQKQLQQQQNSLSPRYSNTVILPRPRSLTDFQGLNNANPNNNGSLRAQTQSSVQLKRPSSVLSLNDLLVGQRNTNESDSDFTTGGEDEEDGLKDPSNSSIDNLEQDYLQEQSRKKSKTSTPTTMLSRSTSGTNLHTLGYVMNQNHLHFSSSSPDFQKELNNRLLNVQQQQQEQHTLLQSQNTSNQSQNQNQNQMMASSSSLSTTPLLLSPRVNMINTAISTQQTPISQSDSQVQELETLPPIRSLPLPFPHMD</sequence>
<dbReference type="EMBL" id="X55734">
    <property type="protein sequence ID" value="CAA39266.1"/>
    <property type="molecule type" value="Genomic_DNA"/>
</dbReference>
<dbReference type="EMBL" id="X55442">
    <property type="protein sequence ID" value="CAA39084.1"/>
    <property type="status" value="ALT_FRAME"/>
    <property type="molecule type" value="Genomic_DNA"/>
</dbReference>
<dbReference type="EMBL" id="Z72557">
    <property type="protein sequence ID" value="CAA96736.1"/>
    <property type="molecule type" value="Genomic_DNA"/>
</dbReference>
<dbReference type="EMBL" id="AY693159">
    <property type="protein sequence ID" value="AAT93178.1"/>
    <property type="molecule type" value="Genomic_DNA"/>
</dbReference>
<dbReference type="EMBL" id="BK006941">
    <property type="protein sequence ID" value="DAA08065.1"/>
    <property type="molecule type" value="Genomic_DNA"/>
</dbReference>
<dbReference type="PIR" id="S17248">
    <property type="entry name" value="S17248"/>
</dbReference>
<dbReference type="RefSeq" id="NP_011480.1">
    <property type="nucleotide sequence ID" value="NM_001180900.1"/>
</dbReference>
<dbReference type="PDB" id="1T5W">
    <property type="method" value="X-ray"/>
    <property type="resolution" value="2.40 A"/>
    <property type="chains" value="C/F=455-462"/>
</dbReference>
<dbReference type="PDB" id="1T5X">
    <property type="method" value="X-ray"/>
    <property type="resolution" value="2.50 A"/>
    <property type="chains" value="C=455-462"/>
</dbReference>
<dbReference type="PDBsum" id="1T5W"/>
<dbReference type="PDBsum" id="1T5X"/>
<dbReference type="SMR" id="P27705"/>
<dbReference type="BioGRID" id="33212">
    <property type="interactions" value="275"/>
</dbReference>
<dbReference type="DIP" id="DIP-665N"/>
<dbReference type="FunCoup" id="P27705">
    <property type="interactions" value="944"/>
</dbReference>
<dbReference type="IntAct" id="P27705">
    <property type="interactions" value="16"/>
</dbReference>
<dbReference type="MINT" id="P27705"/>
<dbReference type="STRING" id="4932.YGL035C"/>
<dbReference type="GlyGen" id="P27705">
    <property type="glycosylation" value="1 site, 1 O-linked glycan (1 site)"/>
</dbReference>
<dbReference type="iPTMnet" id="P27705"/>
<dbReference type="PaxDb" id="4932-YGL035C"/>
<dbReference type="PeptideAtlas" id="P27705"/>
<dbReference type="EnsemblFungi" id="YGL035C_mRNA">
    <property type="protein sequence ID" value="YGL035C"/>
    <property type="gene ID" value="YGL035C"/>
</dbReference>
<dbReference type="GeneID" id="852848"/>
<dbReference type="KEGG" id="sce:YGL035C"/>
<dbReference type="AGR" id="SGD:S000003003"/>
<dbReference type="SGD" id="S000003003">
    <property type="gene designation" value="MIG1"/>
</dbReference>
<dbReference type="VEuPathDB" id="FungiDB:YGL035C"/>
<dbReference type="eggNOG" id="KOG1721">
    <property type="taxonomic scope" value="Eukaryota"/>
</dbReference>
<dbReference type="GeneTree" id="ENSGT00940000169836"/>
<dbReference type="HOGENOM" id="CLU_047856_0_0_1"/>
<dbReference type="InParanoid" id="P27705"/>
<dbReference type="OMA" id="KRIHTNP"/>
<dbReference type="OrthoDB" id="654211at2759"/>
<dbReference type="BioCyc" id="YEAST:G3O-30550-MONOMER"/>
<dbReference type="BioGRID-ORCS" id="852848">
    <property type="hits" value="0 hits in 13 CRISPR screens"/>
</dbReference>
<dbReference type="EvolutionaryTrace" id="P27705"/>
<dbReference type="PRO" id="PR:P27705"/>
<dbReference type="Proteomes" id="UP000002311">
    <property type="component" value="Chromosome VII"/>
</dbReference>
<dbReference type="RNAct" id="P27705">
    <property type="molecule type" value="protein"/>
</dbReference>
<dbReference type="GO" id="GO:0005737">
    <property type="term" value="C:cytoplasm"/>
    <property type="evidence" value="ECO:0000314"/>
    <property type="project" value="SGD"/>
</dbReference>
<dbReference type="GO" id="GO:0005641">
    <property type="term" value="C:nuclear envelope lumen"/>
    <property type="evidence" value="ECO:0000314"/>
    <property type="project" value="SGD"/>
</dbReference>
<dbReference type="GO" id="GO:0005634">
    <property type="term" value="C:nucleus"/>
    <property type="evidence" value="ECO:0000314"/>
    <property type="project" value="SGD"/>
</dbReference>
<dbReference type="GO" id="GO:0001227">
    <property type="term" value="F:DNA-binding transcription repressor activity, RNA polymerase II-specific"/>
    <property type="evidence" value="ECO:0000314"/>
    <property type="project" value="SGD"/>
</dbReference>
<dbReference type="GO" id="GO:0000978">
    <property type="term" value="F:RNA polymerase II cis-regulatory region sequence-specific DNA binding"/>
    <property type="evidence" value="ECO:0000314"/>
    <property type="project" value="SGD"/>
</dbReference>
<dbReference type="GO" id="GO:0043565">
    <property type="term" value="F:sequence-specific DNA binding"/>
    <property type="evidence" value="ECO:0007005"/>
    <property type="project" value="SGD"/>
</dbReference>
<dbReference type="GO" id="GO:0008270">
    <property type="term" value="F:zinc ion binding"/>
    <property type="evidence" value="ECO:0007669"/>
    <property type="project" value="UniProtKB-KW"/>
</dbReference>
<dbReference type="GO" id="GO:0000122">
    <property type="term" value="P:negative regulation of transcription by RNA polymerase II"/>
    <property type="evidence" value="ECO:0000315"/>
    <property type="project" value="SGD"/>
</dbReference>
<dbReference type="GO" id="GO:1900436">
    <property type="term" value="P:positive regulation of filamentous growth of a population of unicellular organisms in response to starvation"/>
    <property type="evidence" value="ECO:0000316"/>
    <property type="project" value="SGD"/>
</dbReference>
<dbReference type="GO" id="GO:0045944">
    <property type="term" value="P:positive regulation of transcription by RNA polymerase II"/>
    <property type="evidence" value="ECO:0000315"/>
    <property type="project" value="SGD"/>
</dbReference>
<dbReference type="FunFam" id="3.30.160.60:FF:000152">
    <property type="entry name" value="DNA-binding protein creA"/>
    <property type="match status" value="1"/>
</dbReference>
<dbReference type="Gene3D" id="3.30.160.60">
    <property type="entry name" value="Classic Zinc Finger"/>
    <property type="match status" value="2"/>
</dbReference>
<dbReference type="InterPro" id="IPR051007">
    <property type="entry name" value="creA/MIG_C2H2-ZnF"/>
</dbReference>
<dbReference type="InterPro" id="IPR036236">
    <property type="entry name" value="Znf_C2H2_sf"/>
</dbReference>
<dbReference type="InterPro" id="IPR013087">
    <property type="entry name" value="Znf_C2H2_type"/>
</dbReference>
<dbReference type="PANTHER" id="PTHR47428">
    <property type="entry name" value="REGULATORY PROTEIN MIG1-RELATED"/>
    <property type="match status" value="1"/>
</dbReference>
<dbReference type="PANTHER" id="PTHR47428:SF1">
    <property type="entry name" value="REGULATORY PROTEIN MIG1-RELATED"/>
    <property type="match status" value="1"/>
</dbReference>
<dbReference type="Pfam" id="PF00096">
    <property type="entry name" value="zf-C2H2"/>
    <property type="match status" value="1"/>
</dbReference>
<dbReference type="SMART" id="SM00355">
    <property type="entry name" value="ZnF_C2H2"/>
    <property type="match status" value="2"/>
</dbReference>
<dbReference type="SUPFAM" id="SSF57667">
    <property type="entry name" value="beta-beta-alpha zinc fingers"/>
    <property type="match status" value="1"/>
</dbReference>
<dbReference type="PROSITE" id="PS00028">
    <property type="entry name" value="ZINC_FINGER_C2H2_1"/>
    <property type="match status" value="2"/>
</dbReference>
<dbReference type="PROSITE" id="PS50157">
    <property type="entry name" value="ZINC_FINGER_C2H2_2"/>
    <property type="match status" value="2"/>
</dbReference>
<protein>
    <recommendedName>
        <fullName>Regulatory protein MIG1</fullName>
    </recommendedName>
    <alternativeName>
        <fullName>Regulatory protein CAT4</fullName>
    </alternativeName>
</protein>
<gene>
    <name type="primary">MIG1</name>
    <name type="synonym">CAT4</name>
    <name type="synonym">SSN1</name>
    <name type="ordered locus">YGL035C</name>
</gene>